<keyword id="KW-0963">Cytoplasm</keyword>
<keyword id="KW-0328">Glycosyltransferase</keyword>
<keyword id="KW-0660">Purine salvage</keyword>
<keyword id="KW-1185">Reference proteome</keyword>
<keyword id="KW-0808">Transferase</keyword>
<evidence type="ECO:0000250" key="1"/>
<evidence type="ECO:0000269" key="2">
    <source>
    </source>
</evidence>
<evidence type="ECO:0000305" key="3"/>
<reference key="1">
    <citation type="journal article" date="2004" name="J. Bacteriol.">
        <title>Complete genome sequence of the genetically tractable hydrogenotrophic methanogen Methanococcus maripaludis.</title>
        <authorList>
            <person name="Hendrickson E.L."/>
            <person name="Kaul R."/>
            <person name="Zhou Y."/>
            <person name="Bovee D."/>
            <person name="Chapman P."/>
            <person name="Chung J."/>
            <person name="Conway de Macario E."/>
            <person name="Dodsworth J.A."/>
            <person name="Gillett W."/>
            <person name="Graham D.E."/>
            <person name="Hackett M."/>
            <person name="Haydock A.K."/>
            <person name="Kang A."/>
            <person name="Land M.L."/>
            <person name="Levy R."/>
            <person name="Lie T.J."/>
            <person name="Major T.A."/>
            <person name="Moore B.C."/>
            <person name="Porat I."/>
            <person name="Palmeiri A."/>
            <person name="Rouse G."/>
            <person name="Saenphimmachak C."/>
            <person name="Soell D."/>
            <person name="Van Dien S."/>
            <person name="Wang T."/>
            <person name="Whitman W.B."/>
            <person name="Xia Q."/>
            <person name="Zhang Y."/>
            <person name="Larimer F.W."/>
            <person name="Olson M.V."/>
            <person name="Leigh J.A."/>
        </authorList>
    </citation>
    <scope>NUCLEOTIDE SEQUENCE [LARGE SCALE GENOMIC DNA]</scope>
    <source>
        <strain>DSM 14266 / JCM 13030 / NBRC 101832 / S2 / LL</strain>
    </source>
</reference>
<reference key="2">
    <citation type="journal article" date="2005" name="J. Bacteriol.">
        <title>Markerless mutagenesis in Methanococcus maripaludis demonstrates roles for alanine dehydrogenase, alanine racemase, and alanine permease.</title>
        <authorList>
            <person name="Moore B.C."/>
            <person name="Leigh J.A."/>
        </authorList>
    </citation>
    <scope>BIOTECHNOLOGY</scope>
    <scope>DISRUPTION PHENOTYPE</scope>
    <source>
        <strain>DSM 14266 / JCM 13030 / NBRC 101832 / S2 / LL</strain>
    </source>
</reference>
<comment type="function">
    <text evidence="1">Catalyzes a salvage reaction resulting in the formation of IMP that is energically less costly than de novo synthesis.</text>
</comment>
<comment type="catalytic activity">
    <reaction>
        <text>IMP + diphosphate = hypoxanthine + 5-phospho-alpha-D-ribose 1-diphosphate</text>
        <dbReference type="Rhea" id="RHEA:17973"/>
        <dbReference type="ChEBI" id="CHEBI:17368"/>
        <dbReference type="ChEBI" id="CHEBI:33019"/>
        <dbReference type="ChEBI" id="CHEBI:58017"/>
        <dbReference type="ChEBI" id="CHEBI:58053"/>
        <dbReference type="EC" id="2.4.2.8"/>
    </reaction>
</comment>
<comment type="catalytic activity">
    <reaction>
        <text>GMP + diphosphate = guanine + 5-phospho-alpha-D-ribose 1-diphosphate</text>
        <dbReference type="Rhea" id="RHEA:25424"/>
        <dbReference type="ChEBI" id="CHEBI:16235"/>
        <dbReference type="ChEBI" id="CHEBI:33019"/>
        <dbReference type="ChEBI" id="CHEBI:58017"/>
        <dbReference type="ChEBI" id="CHEBI:58115"/>
        <dbReference type="EC" id="2.4.2.8"/>
    </reaction>
</comment>
<comment type="pathway">
    <text>Purine metabolism; IMP biosynthesis via salvage pathway; IMP from hypoxanthine: step 1/1.</text>
</comment>
<comment type="subunit">
    <text evidence="1">Homodimer.</text>
</comment>
<comment type="subcellular location">
    <subcellularLocation>
        <location>Cytoplasm</location>
    </subcellularLocation>
</comment>
<comment type="disruption phenotype">
    <text evidence="2">Increased resistance to the base analog 8-azahypoxanthine.</text>
</comment>
<comment type="biotechnology">
    <text evidence="2">Can be used as a counterselectable marker when transforming this organism.</text>
</comment>
<comment type="similarity">
    <text evidence="3">Belongs to the purine/pyrimidine phosphoribosyltransferase family. Archaeal HPRT subfamily.</text>
</comment>
<sequence length="185" mass="20402">MSKLLEESLKTCPIVKRGEYHYFIHPISDGVPLVEPELLRDVSTRVIKMIDTDVDKIVTAEAMGIPIVTAVSIATDIPYVIMRKREYLLEGEIPVHQETGYSKGELYLNGINKGDKVIILDDVISTGGTLVAIINALKRAGADIKDVLCIIDRGNGQNIVEEKTGYKVKTIVKIEVVDGKVNILE</sequence>
<gene>
    <name type="primary">hpt</name>
    <name type="ordered locus">MMP0145</name>
</gene>
<accession>Q6M0X3</accession>
<proteinExistence type="evidence at protein level"/>
<organism>
    <name type="scientific">Methanococcus maripaludis (strain DSM 14266 / JCM 13030 / NBRC 101832 / S2 / LL)</name>
    <dbReference type="NCBI Taxonomy" id="267377"/>
    <lineage>
        <taxon>Archaea</taxon>
        <taxon>Methanobacteriati</taxon>
        <taxon>Methanobacteriota</taxon>
        <taxon>Methanomada group</taxon>
        <taxon>Methanococci</taxon>
        <taxon>Methanococcales</taxon>
        <taxon>Methanococcaceae</taxon>
        <taxon>Methanococcus</taxon>
    </lineage>
</organism>
<name>HPRT_METMP</name>
<feature type="chain" id="PRO_0000149498" description="Hypoxanthine/guanine phosphoribosyltransferase">
    <location>
        <begin position="1"/>
        <end position="185"/>
    </location>
</feature>
<protein>
    <recommendedName>
        <fullName>Hypoxanthine/guanine phosphoribosyltransferase</fullName>
        <shortName>HGPRTase</shortName>
        <ecNumber>2.4.2.8</ecNumber>
    </recommendedName>
</protein>
<dbReference type="EC" id="2.4.2.8"/>
<dbReference type="EMBL" id="BX950229">
    <property type="protein sequence ID" value="CAF29701.1"/>
    <property type="molecule type" value="Genomic_DNA"/>
</dbReference>
<dbReference type="RefSeq" id="WP_011170089.1">
    <property type="nucleotide sequence ID" value="NC_005791.1"/>
</dbReference>
<dbReference type="SMR" id="Q6M0X3"/>
<dbReference type="STRING" id="267377.MMP0145"/>
<dbReference type="EnsemblBacteria" id="CAF29701">
    <property type="protein sequence ID" value="CAF29701"/>
    <property type="gene ID" value="MMP0145"/>
</dbReference>
<dbReference type="GeneID" id="2762740"/>
<dbReference type="KEGG" id="mmp:MMP0145"/>
<dbReference type="PATRIC" id="fig|267377.15.peg.148"/>
<dbReference type="eggNOG" id="arCOG00030">
    <property type="taxonomic scope" value="Archaea"/>
</dbReference>
<dbReference type="HOGENOM" id="CLU_126376_0_0_2"/>
<dbReference type="OrthoDB" id="8323at2157"/>
<dbReference type="UniPathway" id="UPA00591">
    <property type="reaction ID" value="UER00648"/>
</dbReference>
<dbReference type="Proteomes" id="UP000000590">
    <property type="component" value="Chromosome"/>
</dbReference>
<dbReference type="GO" id="GO:0005737">
    <property type="term" value="C:cytoplasm"/>
    <property type="evidence" value="ECO:0007669"/>
    <property type="project" value="UniProtKB-SubCell"/>
</dbReference>
<dbReference type="GO" id="GO:0052657">
    <property type="term" value="F:guanine phosphoribosyltransferase activity"/>
    <property type="evidence" value="ECO:0007669"/>
    <property type="project" value="RHEA"/>
</dbReference>
<dbReference type="GO" id="GO:0004422">
    <property type="term" value="F:hypoxanthine phosphoribosyltransferase activity"/>
    <property type="evidence" value="ECO:0007669"/>
    <property type="project" value="UniProtKB-UniRule"/>
</dbReference>
<dbReference type="GO" id="GO:0032264">
    <property type="term" value="P:IMP salvage"/>
    <property type="evidence" value="ECO:0007669"/>
    <property type="project" value="UniProtKB-UniRule"/>
</dbReference>
<dbReference type="GO" id="GO:0006166">
    <property type="term" value="P:purine ribonucleoside salvage"/>
    <property type="evidence" value="ECO:0007669"/>
    <property type="project" value="UniProtKB-KW"/>
</dbReference>
<dbReference type="CDD" id="cd06223">
    <property type="entry name" value="PRTases_typeI"/>
    <property type="match status" value="1"/>
</dbReference>
<dbReference type="Gene3D" id="3.40.50.2020">
    <property type="match status" value="1"/>
</dbReference>
<dbReference type="HAMAP" id="MF_01467">
    <property type="entry name" value="Hypx_phosphoribosyltr"/>
    <property type="match status" value="1"/>
</dbReference>
<dbReference type="InterPro" id="IPR026597">
    <property type="entry name" value="HGPRTase-like"/>
</dbReference>
<dbReference type="InterPro" id="IPR000836">
    <property type="entry name" value="PRibTrfase_dom"/>
</dbReference>
<dbReference type="InterPro" id="IPR029057">
    <property type="entry name" value="PRTase-like"/>
</dbReference>
<dbReference type="InterPro" id="IPR050118">
    <property type="entry name" value="Pur/Pyrimidine_PRTase"/>
</dbReference>
<dbReference type="NCBIfam" id="NF040646">
    <property type="entry name" value="HPT_Archaea"/>
    <property type="match status" value="1"/>
</dbReference>
<dbReference type="NCBIfam" id="NF002635">
    <property type="entry name" value="PRK02304.1-4"/>
    <property type="match status" value="1"/>
</dbReference>
<dbReference type="PANTHER" id="PTHR43864">
    <property type="entry name" value="HYPOXANTHINE/GUANINE PHOSPHORIBOSYLTRANSFERASE"/>
    <property type="match status" value="1"/>
</dbReference>
<dbReference type="PANTHER" id="PTHR43864:SF1">
    <property type="entry name" value="XANTHINE PHOSPHORIBOSYLTRANSFERASE"/>
    <property type="match status" value="1"/>
</dbReference>
<dbReference type="Pfam" id="PF00156">
    <property type="entry name" value="Pribosyltran"/>
    <property type="match status" value="1"/>
</dbReference>
<dbReference type="SUPFAM" id="SSF53271">
    <property type="entry name" value="PRTase-like"/>
    <property type="match status" value="1"/>
</dbReference>
<dbReference type="PROSITE" id="PS00103">
    <property type="entry name" value="PUR_PYR_PR_TRANSFER"/>
    <property type="match status" value="1"/>
</dbReference>